<keyword id="KW-0028">Amino-acid biosynthesis</keyword>
<keyword id="KW-0057">Aromatic amino acid biosynthesis</keyword>
<keyword id="KW-0521">NADP</keyword>
<keyword id="KW-0560">Oxidoreductase</keyword>
<keyword id="KW-1185">Reference proteome</keyword>
<evidence type="ECO:0000255" key="1">
    <source>
        <dbReference type="HAMAP-Rule" id="MF_00222"/>
    </source>
</evidence>
<sequence>MTENRIPLAGVIGCPIAHSKSPQLHRHWLKTYGVDGHYMPMHVEPEDLESVVRMMPRMGFVGANVTIPHKQSIMEIADKVTDRAKLMGAANTLIFHEDGAIVADNTDGYGFITNLHEGAPDWDAKSGPATVFGAGGASRAVIASLIEAGVPEIRLTNRTRSRAKEVAQTFGSKVTAVDWVEAGNVIEDASLVVNTTSLGMTGQRRLRVPLDGLHSGIVVTDLVYNPLKTELLQAAEEAGCTVVDGLGMLLHQAVPGFERWFGQRPEVNSAARDAIL</sequence>
<accession>Q1GCM4</accession>
<gene>
    <name evidence="1" type="primary">aroE</name>
    <name type="ordered locus">TM1040_2860</name>
</gene>
<name>AROE_RUEST</name>
<organism>
    <name type="scientific">Ruegeria sp. (strain TM1040)</name>
    <name type="common">Silicibacter sp.</name>
    <dbReference type="NCBI Taxonomy" id="292414"/>
    <lineage>
        <taxon>Bacteria</taxon>
        <taxon>Pseudomonadati</taxon>
        <taxon>Pseudomonadota</taxon>
        <taxon>Alphaproteobacteria</taxon>
        <taxon>Rhodobacterales</taxon>
        <taxon>Roseobacteraceae</taxon>
        <taxon>Ruegeria</taxon>
    </lineage>
</organism>
<dbReference type="EC" id="1.1.1.25" evidence="1"/>
<dbReference type="EMBL" id="CP000377">
    <property type="protein sequence ID" value="ABF65592.1"/>
    <property type="molecule type" value="Genomic_DNA"/>
</dbReference>
<dbReference type="RefSeq" id="WP_011540173.1">
    <property type="nucleotide sequence ID" value="NC_008044.1"/>
</dbReference>
<dbReference type="SMR" id="Q1GCM4"/>
<dbReference type="STRING" id="292414.TM1040_2860"/>
<dbReference type="KEGG" id="sit:TM1040_2860"/>
<dbReference type="eggNOG" id="COG0169">
    <property type="taxonomic scope" value="Bacteria"/>
</dbReference>
<dbReference type="HOGENOM" id="CLU_044063_2_0_5"/>
<dbReference type="OrthoDB" id="9792692at2"/>
<dbReference type="UniPathway" id="UPA00053">
    <property type="reaction ID" value="UER00087"/>
</dbReference>
<dbReference type="Proteomes" id="UP000000636">
    <property type="component" value="Chromosome"/>
</dbReference>
<dbReference type="GO" id="GO:0005829">
    <property type="term" value="C:cytosol"/>
    <property type="evidence" value="ECO:0007669"/>
    <property type="project" value="TreeGrafter"/>
</dbReference>
<dbReference type="GO" id="GO:0050661">
    <property type="term" value="F:NADP binding"/>
    <property type="evidence" value="ECO:0007669"/>
    <property type="project" value="InterPro"/>
</dbReference>
<dbReference type="GO" id="GO:0004764">
    <property type="term" value="F:shikimate 3-dehydrogenase (NADP+) activity"/>
    <property type="evidence" value="ECO:0007669"/>
    <property type="project" value="UniProtKB-UniRule"/>
</dbReference>
<dbReference type="GO" id="GO:0008652">
    <property type="term" value="P:amino acid biosynthetic process"/>
    <property type="evidence" value="ECO:0007669"/>
    <property type="project" value="UniProtKB-KW"/>
</dbReference>
<dbReference type="GO" id="GO:0009073">
    <property type="term" value="P:aromatic amino acid family biosynthetic process"/>
    <property type="evidence" value="ECO:0007669"/>
    <property type="project" value="UniProtKB-KW"/>
</dbReference>
<dbReference type="GO" id="GO:0009423">
    <property type="term" value="P:chorismate biosynthetic process"/>
    <property type="evidence" value="ECO:0007669"/>
    <property type="project" value="UniProtKB-UniRule"/>
</dbReference>
<dbReference type="GO" id="GO:0019632">
    <property type="term" value="P:shikimate metabolic process"/>
    <property type="evidence" value="ECO:0007669"/>
    <property type="project" value="InterPro"/>
</dbReference>
<dbReference type="CDD" id="cd01065">
    <property type="entry name" value="NAD_bind_Shikimate_DH"/>
    <property type="match status" value="1"/>
</dbReference>
<dbReference type="FunFam" id="3.40.50.720:FF:000086">
    <property type="entry name" value="Quinate/shikimate dehydrogenase"/>
    <property type="match status" value="1"/>
</dbReference>
<dbReference type="Gene3D" id="3.40.50.10860">
    <property type="entry name" value="Leucine Dehydrogenase, chain A, domain 1"/>
    <property type="match status" value="1"/>
</dbReference>
<dbReference type="Gene3D" id="3.40.50.720">
    <property type="entry name" value="NAD(P)-binding Rossmann-like Domain"/>
    <property type="match status" value="1"/>
</dbReference>
<dbReference type="HAMAP" id="MF_00222">
    <property type="entry name" value="Shikimate_DH_AroE"/>
    <property type="match status" value="1"/>
</dbReference>
<dbReference type="InterPro" id="IPR046346">
    <property type="entry name" value="Aminoacid_DH-like_N_sf"/>
</dbReference>
<dbReference type="InterPro" id="IPR036291">
    <property type="entry name" value="NAD(P)-bd_dom_sf"/>
</dbReference>
<dbReference type="InterPro" id="IPR041121">
    <property type="entry name" value="SDH_C"/>
</dbReference>
<dbReference type="InterPro" id="IPR011342">
    <property type="entry name" value="Shikimate_DH"/>
</dbReference>
<dbReference type="InterPro" id="IPR013708">
    <property type="entry name" value="Shikimate_DH-bd_N"/>
</dbReference>
<dbReference type="InterPro" id="IPR022893">
    <property type="entry name" value="Shikimate_DH_fam"/>
</dbReference>
<dbReference type="InterPro" id="IPR006151">
    <property type="entry name" value="Shikm_DH/Glu-tRNA_Rdtase"/>
</dbReference>
<dbReference type="NCBIfam" id="TIGR00507">
    <property type="entry name" value="aroE"/>
    <property type="match status" value="1"/>
</dbReference>
<dbReference type="NCBIfam" id="NF001312">
    <property type="entry name" value="PRK00258.1-4"/>
    <property type="match status" value="1"/>
</dbReference>
<dbReference type="PANTHER" id="PTHR21089:SF1">
    <property type="entry name" value="BIFUNCTIONAL 3-DEHYDROQUINATE DEHYDRATASE_SHIKIMATE DEHYDROGENASE, CHLOROPLASTIC"/>
    <property type="match status" value="1"/>
</dbReference>
<dbReference type="PANTHER" id="PTHR21089">
    <property type="entry name" value="SHIKIMATE DEHYDROGENASE"/>
    <property type="match status" value="1"/>
</dbReference>
<dbReference type="Pfam" id="PF18317">
    <property type="entry name" value="SDH_C"/>
    <property type="match status" value="1"/>
</dbReference>
<dbReference type="Pfam" id="PF01488">
    <property type="entry name" value="Shikimate_DH"/>
    <property type="match status" value="1"/>
</dbReference>
<dbReference type="Pfam" id="PF08501">
    <property type="entry name" value="Shikimate_dh_N"/>
    <property type="match status" value="1"/>
</dbReference>
<dbReference type="SUPFAM" id="SSF53223">
    <property type="entry name" value="Aminoacid dehydrogenase-like, N-terminal domain"/>
    <property type="match status" value="1"/>
</dbReference>
<dbReference type="SUPFAM" id="SSF51735">
    <property type="entry name" value="NAD(P)-binding Rossmann-fold domains"/>
    <property type="match status" value="1"/>
</dbReference>
<comment type="function">
    <text evidence="1">Involved in the biosynthesis of the chorismate, which leads to the biosynthesis of aromatic amino acids. Catalyzes the reversible NADPH linked reduction of 3-dehydroshikimate (DHSA) to yield shikimate (SA).</text>
</comment>
<comment type="catalytic activity">
    <reaction evidence="1">
        <text>shikimate + NADP(+) = 3-dehydroshikimate + NADPH + H(+)</text>
        <dbReference type="Rhea" id="RHEA:17737"/>
        <dbReference type="ChEBI" id="CHEBI:15378"/>
        <dbReference type="ChEBI" id="CHEBI:16630"/>
        <dbReference type="ChEBI" id="CHEBI:36208"/>
        <dbReference type="ChEBI" id="CHEBI:57783"/>
        <dbReference type="ChEBI" id="CHEBI:58349"/>
        <dbReference type="EC" id="1.1.1.25"/>
    </reaction>
</comment>
<comment type="pathway">
    <text evidence="1">Metabolic intermediate biosynthesis; chorismate biosynthesis; chorismate from D-erythrose 4-phosphate and phosphoenolpyruvate: step 4/7.</text>
</comment>
<comment type="subunit">
    <text evidence="1">Homodimer.</text>
</comment>
<comment type="similarity">
    <text evidence="1">Belongs to the shikimate dehydrogenase family.</text>
</comment>
<proteinExistence type="inferred from homology"/>
<reference key="1">
    <citation type="submission" date="2006-05" db="EMBL/GenBank/DDBJ databases">
        <title>Complete sequence of chromosome of Silicibacter sp. TM1040.</title>
        <authorList>
            <consortium name="US DOE Joint Genome Institute"/>
            <person name="Copeland A."/>
            <person name="Lucas S."/>
            <person name="Lapidus A."/>
            <person name="Barry K."/>
            <person name="Detter J.C."/>
            <person name="Glavina del Rio T."/>
            <person name="Hammon N."/>
            <person name="Israni S."/>
            <person name="Dalin E."/>
            <person name="Tice H."/>
            <person name="Pitluck S."/>
            <person name="Brettin T."/>
            <person name="Bruce D."/>
            <person name="Han C."/>
            <person name="Tapia R."/>
            <person name="Goodwin L."/>
            <person name="Thompson L.S."/>
            <person name="Gilna P."/>
            <person name="Schmutz J."/>
            <person name="Larimer F."/>
            <person name="Land M."/>
            <person name="Hauser L."/>
            <person name="Kyrpides N."/>
            <person name="Kim E."/>
            <person name="Belas R."/>
            <person name="Moran M.A."/>
            <person name="Buchan A."/>
            <person name="Gonzalez J.M."/>
            <person name="Schell M.A."/>
            <person name="Sun F."/>
            <person name="Richardson P."/>
        </authorList>
    </citation>
    <scope>NUCLEOTIDE SEQUENCE [LARGE SCALE GENOMIC DNA]</scope>
    <source>
        <strain>TM1040</strain>
    </source>
</reference>
<feature type="chain" id="PRO_0000325172" description="Shikimate dehydrogenase (NADP(+))">
    <location>
        <begin position="1"/>
        <end position="276"/>
    </location>
</feature>
<feature type="active site" description="Proton acceptor" evidence="1">
    <location>
        <position position="70"/>
    </location>
</feature>
<feature type="binding site" evidence="1">
    <location>
        <begin position="19"/>
        <end position="21"/>
    </location>
    <ligand>
        <name>shikimate</name>
        <dbReference type="ChEBI" id="CHEBI:36208"/>
    </ligand>
</feature>
<feature type="binding site" evidence="1">
    <location>
        <position position="66"/>
    </location>
    <ligand>
        <name>shikimate</name>
        <dbReference type="ChEBI" id="CHEBI:36208"/>
    </ligand>
</feature>
<feature type="binding site" evidence="1">
    <location>
        <position position="82"/>
    </location>
    <ligand>
        <name>NADP(+)</name>
        <dbReference type="ChEBI" id="CHEBI:58349"/>
    </ligand>
</feature>
<feature type="binding site" evidence="1">
    <location>
        <position position="91"/>
    </location>
    <ligand>
        <name>shikimate</name>
        <dbReference type="ChEBI" id="CHEBI:36208"/>
    </ligand>
</feature>
<feature type="binding site" evidence="1">
    <location>
        <position position="107"/>
    </location>
    <ligand>
        <name>shikimate</name>
        <dbReference type="ChEBI" id="CHEBI:36208"/>
    </ligand>
</feature>
<feature type="binding site" evidence="1">
    <location>
        <begin position="133"/>
        <end position="137"/>
    </location>
    <ligand>
        <name>NADP(+)</name>
        <dbReference type="ChEBI" id="CHEBI:58349"/>
    </ligand>
</feature>
<feature type="binding site" evidence="1">
    <location>
        <begin position="157"/>
        <end position="162"/>
    </location>
    <ligand>
        <name>NADP(+)</name>
        <dbReference type="ChEBI" id="CHEBI:58349"/>
    </ligand>
</feature>
<feature type="binding site" evidence="1">
    <location>
        <position position="222"/>
    </location>
    <ligand>
        <name>NADP(+)</name>
        <dbReference type="ChEBI" id="CHEBI:58349"/>
    </ligand>
</feature>
<feature type="binding site" evidence="1">
    <location>
        <position position="224"/>
    </location>
    <ligand>
        <name>shikimate</name>
        <dbReference type="ChEBI" id="CHEBI:36208"/>
    </ligand>
</feature>
<feature type="binding site" evidence="1">
    <location>
        <position position="245"/>
    </location>
    <ligand>
        <name>NADP(+)</name>
        <dbReference type="ChEBI" id="CHEBI:58349"/>
    </ligand>
</feature>
<protein>
    <recommendedName>
        <fullName evidence="1">Shikimate dehydrogenase (NADP(+))</fullName>
        <shortName evidence="1">SDH</shortName>
        <ecNumber evidence="1">1.1.1.25</ecNumber>
    </recommendedName>
</protein>